<keyword id="KW-0687">Ribonucleoprotein</keyword>
<keyword id="KW-0689">Ribosomal protein</keyword>
<comment type="similarity">
    <text evidence="1">Belongs to the eukaryotic ribosomal protein eL40 family.</text>
</comment>
<accession>A6VIE1</accession>
<organism>
    <name type="scientific">Methanococcus maripaludis (strain C7 / ATCC BAA-1331)</name>
    <dbReference type="NCBI Taxonomy" id="426368"/>
    <lineage>
        <taxon>Archaea</taxon>
        <taxon>Methanobacteriati</taxon>
        <taxon>Methanobacteriota</taxon>
        <taxon>Methanomada group</taxon>
        <taxon>Methanococci</taxon>
        <taxon>Methanococcales</taxon>
        <taxon>Methanococcaceae</taxon>
        <taxon>Methanococcus</taxon>
    </lineage>
</organism>
<evidence type="ECO:0000255" key="1">
    <source>
        <dbReference type="HAMAP-Rule" id="MF_00788"/>
    </source>
</evidence>
<evidence type="ECO:0000305" key="2"/>
<feature type="chain" id="PRO_1000046885" description="Large ribosomal subunit protein eL40">
    <location>
        <begin position="1"/>
        <end position="47"/>
    </location>
</feature>
<gene>
    <name evidence="1" type="primary">rpl40e</name>
    <name type="ordered locus">MmarC7_1151</name>
</gene>
<reference key="1">
    <citation type="submission" date="2007-06" db="EMBL/GenBank/DDBJ databases">
        <title>Complete sequence of Methanococcus maripaludis C7.</title>
        <authorList>
            <consortium name="US DOE Joint Genome Institute"/>
            <person name="Copeland A."/>
            <person name="Lucas S."/>
            <person name="Lapidus A."/>
            <person name="Barry K."/>
            <person name="Glavina del Rio T."/>
            <person name="Dalin E."/>
            <person name="Tice H."/>
            <person name="Pitluck S."/>
            <person name="Clum A."/>
            <person name="Schmutz J."/>
            <person name="Larimer F."/>
            <person name="Land M."/>
            <person name="Hauser L."/>
            <person name="Kyrpides N."/>
            <person name="Anderson I."/>
            <person name="Sieprawska-Lupa M."/>
            <person name="Whitman W.B."/>
            <person name="Richardson P."/>
        </authorList>
    </citation>
    <scope>NUCLEOTIDE SEQUENCE [LARGE SCALE GENOMIC DNA]</scope>
    <source>
        <strain>C7 / ATCC BAA-1331</strain>
    </source>
</reference>
<protein>
    <recommendedName>
        <fullName evidence="1">Large ribosomal subunit protein eL40</fullName>
    </recommendedName>
    <alternativeName>
        <fullName evidence="2">50S ribosomal protein L40e</fullName>
    </alternativeName>
</protein>
<dbReference type="EMBL" id="CP000745">
    <property type="protein sequence ID" value="ABR66217.1"/>
    <property type="molecule type" value="Genomic_DNA"/>
</dbReference>
<dbReference type="SMR" id="A6VIE1"/>
<dbReference type="STRING" id="426368.MmarC7_1151"/>
<dbReference type="KEGG" id="mmz:MmarC7_1151"/>
<dbReference type="eggNOG" id="arCOG04049">
    <property type="taxonomic scope" value="Archaea"/>
</dbReference>
<dbReference type="HOGENOM" id="CLU_205640_0_0_2"/>
<dbReference type="OrthoDB" id="45138at2157"/>
<dbReference type="GO" id="GO:1990904">
    <property type="term" value="C:ribonucleoprotein complex"/>
    <property type="evidence" value="ECO:0007669"/>
    <property type="project" value="UniProtKB-KW"/>
</dbReference>
<dbReference type="GO" id="GO:0005840">
    <property type="term" value="C:ribosome"/>
    <property type="evidence" value="ECO:0007669"/>
    <property type="project" value="UniProtKB-KW"/>
</dbReference>
<dbReference type="GO" id="GO:0003735">
    <property type="term" value="F:structural constituent of ribosome"/>
    <property type="evidence" value="ECO:0007669"/>
    <property type="project" value="InterPro"/>
</dbReference>
<dbReference type="GO" id="GO:0006412">
    <property type="term" value="P:translation"/>
    <property type="evidence" value="ECO:0007669"/>
    <property type="project" value="UniProtKB-UniRule"/>
</dbReference>
<dbReference type="Gene3D" id="4.10.1060.50">
    <property type="match status" value="1"/>
</dbReference>
<dbReference type="HAMAP" id="MF_00788">
    <property type="entry name" value="Ribosomal_eL40"/>
    <property type="match status" value="1"/>
</dbReference>
<dbReference type="InterPro" id="IPR023657">
    <property type="entry name" value="Ribosomal_eL40_arc"/>
</dbReference>
<dbReference type="InterPro" id="IPR001975">
    <property type="entry name" value="Ribosomal_eL40_dom"/>
</dbReference>
<dbReference type="InterPro" id="IPR038587">
    <property type="entry name" value="Ribosomal_eL40_sf"/>
</dbReference>
<dbReference type="InterPro" id="IPR011332">
    <property type="entry name" value="Ribosomal_zn-bd"/>
</dbReference>
<dbReference type="NCBIfam" id="NF003161">
    <property type="entry name" value="PRK04136.1"/>
    <property type="match status" value="1"/>
</dbReference>
<dbReference type="PANTHER" id="PTHR39649">
    <property type="entry name" value="50S RIBOSOMAL PROTEIN L40E"/>
    <property type="match status" value="1"/>
</dbReference>
<dbReference type="PANTHER" id="PTHR39649:SF1">
    <property type="entry name" value="LARGE RIBOSOMAL SUBUNIT PROTEIN EL40"/>
    <property type="match status" value="1"/>
</dbReference>
<dbReference type="Pfam" id="PF01020">
    <property type="entry name" value="Ribosomal_L40e"/>
    <property type="match status" value="1"/>
</dbReference>
<dbReference type="SMART" id="SM01377">
    <property type="entry name" value="Ribosomal_L40e"/>
    <property type="match status" value="1"/>
</dbReference>
<dbReference type="SUPFAM" id="SSF57829">
    <property type="entry name" value="Zn-binding ribosomal proteins"/>
    <property type="match status" value="1"/>
</dbReference>
<name>RL40_METM7</name>
<proteinExistence type="inferred from homology"/>
<sequence>MAFEEAIKRVFMKKICMKCNSRNSWKATKCRKCGYTNLRPKAKEARA</sequence>